<reference key="1">
    <citation type="journal article" date="2000" name="J. Mammal.">
        <title>Molecular systematics of a holarctic rodent (Microtus, Muridae).</title>
        <authorList>
            <person name="Conroy C.J."/>
            <person name="Cook J.A."/>
        </authorList>
    </citation>
    <scope>NUCLEOTIDE SEQUENCE [GENOMIC DNA]</scope>
</reference>
<feature type="chain" id="PRO_0000255074" description="Cytochrome b">
    <location>
        <begin position="1"/>
        <end position="380"/>
    </location>
</feature>
<feature type="transmembrane region" description="Helical" evidence="2">
    <location>
        <begin position="33"/>
        <end position="53"/>
    </location>
</feature>
<feature type="transmembrane region" description="Helical" evidence="2">
    <location>
        <begin position="77"/>
        <end position="98"/>
    </location>
</feature>
<feature type="transmembrane region" description="Helical" evidence="2">
    <location>
        <begin position="113"/>
        <end position="133"/>
    </location>
</feature>
<feature type="transmembrane region" description="Helical" evidence="2">
    <location>
        <begin position="178"/>
        <end position="198"/>
    </location>
</feature>
<feature type="transmembrane region" description="Helical" evidence="2">
    <location>
        <begin position="226"/>
        <end position="246"/>
    </location>
</feature>
<feature type="transmembrane region" description="Helical" evidence="2">
    <location>
        <begin position="288"/>
        <end position="308"/>
    </location>
</feature>
<feature type="transmembrane region" description="Helical" evidence="2">
    <location>
        <begin position="320"/>
        <end position="340"/>
    </location>
</feature>
<feature type="transmembrane region" description="Helical" evidence="2">
    <location>
        <begin position="347"/>
        <end position="367"/>
    </location>
</feature>
<feature type="binding site" description="axial binding residue" evidence="2">
    <location>
        <position position="83"/>
    </location>
    <ligand>
        <name>heme b</name>
        <dbReference type="ChEBI" id="CHEBI:60344"/>
        <label>b562</label>
    </ligand>
    <ligandPart>
        <name>Fe</name>
        <dbReference type="ChEBI" id="CHEBI:18248"/>
    </ligandPart>
</feature>
<feature type="binding site" description="axial binding residue" evidence="2">
    <location>
        <position position="97"/>
    </location>
    <ligand>
        <name>heme b</name>
        <dbReference type="ChEBI" id="CHEBI:60344"/>
        <label>b566</label>
    </ligand>
    <ligandPart>
        <name>Fe</name>
        <dbReference type="ChEBI" id="CHEBI:18248"/>
    </ligandPart>
</feature>
<feature type="binding site" description="axial binding residue" evidence="2">
    <location>
        <position position="182"/>
    </location>
    <ligand>
        <name>heme b</name>
        <dbReference type="ChEBI" id="CHEBI:60344"/>
        <label>b562</label>
    </ligand>
    <ligandPart>
        <name>Fe</name>
        <dbReference type="ChEBI" id="CHEBI:18248"/>
    </ligandPart>
</feature>
<feature type="binding site" description="axial binding residue" evidence="2">
    <location>
        <position position="196"/>
    </location>
    <ligand>
        <name>heme b</name>
        <dbReference type="ChEBI" id="CHEBI:60344"/>
        <label>b566</label>
    </ligand>
    <ligandPart>
        <name>Fe</name>
        <dbReference type="ChEBI" id="CHEBI:18248"/>
    </ligandPart>
</feature>
<feature type="binding site" evidence="2">
    <location>
        <position position="201"/>
    </location>
    <ligand>
        <name>a ubiquinone</name>
        <dbReference type="ChEBI" id="CHEBI:16389"/>
    </ligand>
</feature>
<protein>
    <recommendedName>
        <fullName>Cytochrome b</fullName>
    </recommendedName>
    <alternativeName>
        <fullName>Complex III subunit 3</fullName>
    </alternativeName>
    <alternativeName>
        <fullName>Complex III subunit III</fullName>
    </alternativeName>
    <alternativeName>
        <fullName>Cytochrome b-c1 complex subunit 3</fullName>
    </alternativeName>
    <alternativeName>
        <fullName>Ubiquinol-cytochrome-c reductase complex cytochrome b subunit</fullName>
    </alternativeName>
</protein>
<comment type="function">
    <text evidence="2">Component of the ubiquinol-cytochrome c reductase complex (complex III or cytochrome b-c1 complex) that is part of the mitochondrial respiratory chain. The b-c1 complex mediates electron transfer from ubiquinol to cytochrome c. Contributes to the generation of a proton gradient across the mitochondrial membrane that is then used for ATP synthesis.</text>
</comment>
<comment type="cofactor">
    <cofactor evidence="2">
        <name>heme b</name>
        <dbReference type="ChEBI" id="CHEBI:60344"/>
    </cofactor>
    <text evidence="2">Binds 2 heme b groups non-covalently.</text>
</comment>
<comment type="subunit">
    <text evidence="2">The cytochrome bc1 complex contains 11 subunits: 3 respiratory subunits (MT-CYB, CYC1 and UQCRFS1), 2 core proteins (UQCRC1 and UQCRC2) and 6 low-molecular weight proteins (UQCRH/QCR6, UQCRB/QCR7, UQCRQ/QCR8, UQCR10/QCR9, UQCR11/QCR10 and a cleavage product of UQCRFS1). This cytochrome bc1 complex then forms a dimer.</text>
</comment>
<comment type="subcellular location">
    <subcellularLocation>
        <location evidence="2">Mitochondrion inner membrane</location>
        <topology evidence="2">Multi-pass membrane protein</topology>
    </subcellularLocation>
</comment>
<comment type="miscellaneous">
    <text evidence="1">Heme 1 (or BL or b562) is low-potential and absorbs at about 562 nm, and heme 2 (or BH or b566) is high-potential and absorbs at about 566 nm.</text>
</comment>
<comment type="similarity">
    <text evidence="3 4">Belongs to the cytochrome b family.</text>
</comment>
<comment type="caution">
    <text evidence="2">The full-length protein contains only eight transmembrane helices, not nine as predicted by bioinformatics tools.</text>
</comment>
<evidence type="ECO:0000250" key="1"/>
<evidence type="ECO:0000250" key="2">
    <source>
        <dbReference type="UniProtKB" id="P00157"/>
    </source>
</evidence>
<evidence type="ECO:0000255" key="3">
    <source>
        <dbReference type="PROSITE-ProRule" id="PRU00967"/>
    </source>
</evidence>
<evidence type="ECO:0000255" key="4">
    <source>
        <dbReference type="PROSITE-ProRule" id="PRU00968"/>
    </source>
</evidence>
<geneLocation type="mitochondrion"/>
<proteinExistence type="inferred from homology"/>
<dbReference type="EMBL" id="AF163891">
    <property type="protein sequence ID" value="AAF97415.1"/>
    <property type="molecule type" value="Genomic_DNA"/>
</dbReference>
<dbReference type="SMR" id="Q9MI38"/>
<dbReference type="GO" id="GO:0005743">
    <property type="term" value="C:mitochondrial inner membrane"/>
    <property type="evidence" value="ECO:0007669"/>
    <property type="project" value="UniProtKB-SubCell"/>
</dbReference>
<dbReference type="GO" id="GO:0045275">
    <property type="term" value="C:respiratory chain complex III"/>
    <property type="evidence" value="ECO:0007669"/>
    <property type="project" value="InterPro"/>
</dbReference>
<dbReference type="GO" id="GO:0046872">
    <property type="term" value="F:metal ion binding"/>
    <property type="evidence" value="ECO:0007669"/>
    <property type="project" value="UniProtKB-KW"/>
</dbReference>
<dbReference type="GO" id="GO:0008121">
    <property type="term" value="F:ubiquinol-cytochrome-c reductase activity"/>
    <property type="evidence" value="ECO:0007669"/>
    <property type="project" value="InterPro"/>
</dbReference>
<dbReference type="GO" id="GO:0006122">
    <property type="term" value="P:mitochondrial electron transport, ubiquinol to cytochrome c"/>
    <property type="evidence" value="ECO:0007669"/>
    <property type="project" value="TreeGrafter"/>
</dbReference>
<dbReference type="CDD" id="cd00290">
    <property type="entry name" value="cytochrome_b_C"/>
    <property type="match status" value="1"/>
</dbReference>
<dbReference type="CDD" id="cd00284">
    <property type="entry name" value="Cytochrome_b_N"/>
    <property type="match status" value="1"/>
</dbReference>
<dbReference type="FunFam" id="1.20.810.10:FF:000002">
    <property type="entry name" value="Cytochrome b"/>
    <property type="match status" value="1"/>
</dbReference>
<dbReference type="Gene3D" id="1.20.810.10">
    <property type="entry name" value="Cytochrome Bc1 Complex, Chain C"/>
    <property type="match status" value="1"/>
</dbReference>
<dbReference type="InterPro" id="IPR005798">
    <property type="entry name" value="Cyt_b/b6_C"/>
</dbReference>
<dbReference type="InterPro" id="IPR036150">
    <property type="entry name" value="Cyt_b/b6_C_sf"/>
</dbReference>
<dbReference type="InterPro" id="IPR005797">
    <property type="entry name" value="Cyt_b/b6_N"/>
</dbReference>
<dbReference type="InterPro" id="IPR027387">
    <property type="entry name" value="Cytb/b6-like_sf"/>
</dbReference>
<dbReference type="InterPro" id="IPR030689">
    <property type="entry name" value="Cytochrome_b"/>
</dbReference>
<dbReference type="InterPro" id="IPR048260">
    <property type="entry name" value="Cytochrome_b_C_euk/bac"/>
</dbReference>
<dbReference type="InterPro" id="IPR048259">
    <property type="entry name" value="Cytochrome_b_N_euk/bac"/>
</dbReference>
<dbReference type="InterPro" id="IPR016174">
    <property type="entry name" value="Di-haem_cyt_TM"/>
</dbReference>
<dbReference type="PANTHER" id="PTHR19271">
    <property type="entry name" value="CYTOCHROME B"/>
    <property type="match status" value="1"/>
</dbReference>
<dbReference type="PANTHER" id="PTHR19271:SF16">
    <property type="entry name" value="CYTOCHROME B"/>
    <property type="match status" value="1"/>
</dbReference>
<dbReference type="Pfam" id="PF00032">
    <property type="entry name" value="Cytochrom_B_C"/>
    <property type="match status" value="1"/>
</dbReference>
<dbReference type="Pfam" id="PF00033">
    <property type="entry name" value="Cytochrome_B"/>
    <property type="match status" value="1"/>
</dbReference>
<dbReference type="PIRSF" id="PIRSF038885">
    <property type="entry name" value="COB"/>
    <property type="match status" value="1"/>
</dbReference>
<dbReference type="SUPFAM" id="SSF81648">
    <property type="entry name" value="a domain/subunit of cytochrome bc1 complex (Ubiquinol-cytochrome c reductase)"/>
    <property type="match status" value="1"/>
</dbReference>
<dbReference type="SUPFAM" id="SSF81342">
    <property type="entry name" value="Transmembrane di-heme cytochromes"/>
    <property type="match status" value="1"/>
</dbReference>
<dbReference type="PROSITE" id="PS51003">
    <property type="entry name" value="CYTB_CTER"/>
    <property type="match status" value="1"/>
</dbReference>
<dbReference type="PROSITE" id="PS51002">
    <property type="entry name" value="CYTB_NTER"/>
    <property type="match status" value="1"/>
</dbReference>
<accession>Q9MI38</accession>
<organism>
    <name type="scientific">Microtus californicus</name>
    <name type="common">California vole</name>
    <dbReference type="NCBI Taxonomy" id="100895"/>
    <lineage>
        <taxon>Eukaryota</taxon>
        <taxon>Metazoa</taxon>
        <taxon>Chordata</taxon>
        <taxon>Craniata</taxon>
        <taxon>Vertebrata</taxon>
        <taxon>Euteleostomi</taxon>
        <taxon>Mammalia</taxon>
        <taxon>Eutheria</taxon>
        <taxon>Euarchontoglires</taxon>
        <taxon>Glires</taxon>
        <taxon>Rodentia</taxon>
        <taxon>Myomorpha</taxon>
        <taxon>Muroidea</taxon>
        <taxon>Cricetidae</taxon>
        <taxon>Arvicolinae</taxon>
        <taxon>Microtus</taxon>
    </lineage>
</organism>
<sequence length="380" mass="42888">MTIIRKKHPLIKIINHSFIDLPTPSNISSWWNFGSLLGLCLIIQILTGLFLAMHYTSDTATAFSSVAHICRDVNYGWLIRYMHANGASMFFICLFMHVGRGIYYGSYNMIETWNMGIVLLFAVMATAFMGYVLPWGQMSFWGATVITNLLSAIPYIGTTLVEWIWGGFSVDKATLTRFFAFHFILPFIITALVLVHLLFLHETGSNNPTGLNSDTDKIPFHPYYTIKDFLGVLLLLMAFMILTLFFPDILGDPDNYTPANPLNTPPHIKPEWYFLFAYAILRSIPNKLGGVLALILSILILALMPLLHTSKQKTLTFRPITQTMYWILVADLLILTWIGGQPVEYPFIIIGQAASIAYFTIIVILMPIAGMIENNILDLD</sequence>
<name>CYB_MICCF</name>
<keyword id="KW-0249">Electron transport</keyword>
<keyword id="KW-0349">Heme</keyword>
<keyword id="KW-0408">Iron</keyword>
<keyword id="KW-0472">Membrane</keyword>
<keyword id="KW-0479">Metal-binding</keyword>
<keyword id="KW-0496">Mitochondrion</keyword>
<keyword id="KW-0999">Mitochondrion inner membrane</keyword>
<keyword id="KW-0679">Respiratory chain</keyword>
<keyword id="KW-0812">Transmembrane</keyword>
<keyword id="KW-1133">Transmembrane helix</keyword>
<keyword id="KW-0813">Transport</keyword>
<keyword id="KW-0830">Ubiquinone</keyword>
<gene>
    <name type="primary">MT-CYB</name>
    <name type="synonym">COB</name>
    <name type="synonym">CYTB</name>
    <name type="synonym">MTCYB</name>
</gene>